<dbReference type="EC" id="7.4.2.8" evidence="1"/>
<dbReference type="EMBL" id="CP000411">
    <property type="protein sequence ID" value="ABJ57192.1"/>
    <property type="molecule type" value="Genomic_DNA"/>
</dbReference>
<dbReference type="RefSeq" id="WP_002821513.1">
    <property type="nucleotide sequence ID" value="NC_008528.1"/>
</dbReference>
<dbReference type="SMR" id="Q04ED0"/>
<dbReference type="STRING" id="203123.OEOE_1321"/>
<dbReference type="GeneID" id="75065576"/>
<dbReference type="KEGG" id="ooe:OEOE_1321"/>
<dbReference type="PATRIC" id="fig|203123.7.peg.1336"/>
<dbReference type="eggNOG" id="COG0653">
    <property type="taxonomic scope" value="Bacteria"/>
</dbReference>
<dbReference type="HOGENOM" id="CLU_005314_3_0_9"/>
<dbReference type="Proteomes" id="UP000000774">
    <property type="component" value="Chromosome"/>
</dbReference>
<dbReference type="GO" id="GO:0031522">
    <property type="term" value="C:cell envelope Sec protein transport complex"/>
    <property type="evidence" value="ECO:0007669"/>
    <property type="project" value="TreeGrafter"/>
</dbReference>
<dbReference type="GO" id="GO:0005829">
    <property type="term" value="C:cytosol"/>
    <property type="evidence" value="ECO:0007669"/>
    <property type="project" value="TreeGrafter"/>
</dbReference>
<dbReference type="GO" id="GO:0005886">
    <property type="term" value="C:plasma membrane"/>
    <property type="evidence" value="ECO:0007669"/>
    <property type="project" value="UniProtKB-SubCell"/>
</dbReference>
<dbReference type="GO" id="GO:0005524">
    <property type="term" value="F:ATP binding"/>
    <property type="evidence" value="ECO:0007669"/>
    <property type="project" value="UniProtKB-UniRule"/>
</dbReference>
<dbReference type="GO" id="GO:0008564">
    <property type="term" value="F:protein-exporting ATPase activity"/>
    <property type="evidence" value="ECO:0007669"/>
    <property type="project" value="UniProtKB-EC"/>
</dbReference>
<dbReference type="GO" id="GO:0065002">
    <property type="term" value="P:intracellular protein transmembrane transport"/>
    <property type="evidence" value="ECO:0007669"/>
    <property type="project" value="UniProtKB-UniRule"/>
</dbReference>
<dbReference type="GO" id="GO:0017038">
    <property type="term" value="P:protein import"/>
    <property type="evidence" value="ECO:0007669"/>
    <property type="project" value="InterPro"/>
</dbReference>
<dbReference type="GO" id="GO:0006605">
    <property type="term" value="P:protein targeting"/>
    <property type="evidence" value="ECO:0007669"/>
    <property type="project" value="UniProtKB-UniRule"/>
</dbReference>
<dbReference type="GO" id="GO:0043952">
    <property type="term" value="P:protein transport by the Sec complex"/>
    <property type="evidence" value="ECO:0007669"/>
    <property type="project" value="TreeGrafter"/>
</dbReference>
<dbReference type="CDD" id="cd17928">
    <property type="entry name" value="DEXDc_SecA"/>
    <property type="match status" value="1"/>
</dbReference>
<dbReference type="CDD" id="cd18803">
    <property type="entry name" value="SF2_C_secA"/>
    <property type="match status" value="1"/>
</dbReference>
<dbReference type="FunFam" id="3.40.50.300:FF:000429">
    <property type="entry name" value="Preprotein translocase subunit SecA"/>
    <property type="match status" value="1"/>
</dbReference>
<dbReference type="Gene3D" id="1.10.3060.10">
    <property type="entry name" value="Helical scaffold and wing domains of SecA"/>
    <property type="match status" value="1"/>
</dbReference>
<dbReference type="Gene3D" id="3.40.50.300">
    <property type="entry name" value="P-loop containing nucleotide triphosphate hydrolases"/>
    <property type="match status" value="2"/>
</dbReference>
<dbReference type="Gene3D" id="3.90.1440.10">
    <property type="entry name" value="SecA, preprotein cross-linking domain"/>
    <property type="match status" value="1"/>
</dbReference>
<dbReference type="HAMAP" id="MF_01382">
    <property type="entry name" value="SecA"/>
    <property type="match status" value="1"/>
</dbReference>
<dbReference type="InterPro" id="IPR014001">
    <property type="entry name" value="Helicase_ATP-bd"/>
</dbReference>
<dbReference type="InterPro" id="IPR001650">
    <property type="entry name" value="Helicase_C-like"/>
</dbReference>
<dbReference type="InterPro" id="IPR027417">
    <property type="entry name" value="P-loop_NTPase"/>
</dbReference>
<dbReference type="InterPro" id="IPR000185">
    <property type="entry name" value="SecA"/>
</dbReference>
<dbReference type="InterPro" id="IPR020937">
    <property type="entry name" value="SecA_CS"/>
</dbReference>
<dbReference type="InterPro" id="IPR011115">
    <property type="entry name" value="SecA_DEAD"/>
</dbReference>
<dbReference type="InterPro" id="IPR014018">
    <property type="entry name" value="SecA_motor_DEAD"/>
</dbReference>
<dbReference type="InterPro" id="IPR011130">
    <property type="entry name" value="SecA_preprotein_X-link_dom"/>
</dbReference>
<dbReference type="InterPro" id="IPR044722">
    <property type="entry name" value="SecA_SF2_C"/>
</dbReference>
<dbReference type="InterPro" id="IPR011116">
    <property type="entry name" value="SecA_Wing/Scaffold"/>
</dbReference>
<dbReference type="InterPro" id="IPR036266">
    <property type="entry name" value="SecA_Wing/Scaffold_sf"/>
</dbReference>
<dbReference type="InterPro" id="IPR036670">
    <property type="entry name" value="SecA_X-link_sf"/>
</dbReference>
<dbReference type="NCBIfam" id="NF006630">
    <property type="entry name" value="PRK09200.1"/>
    <property type="match status" value="1"/>
</dbReference>
<dbReference type="NCBIfam" id="TIGR00963">
    <property type="entry name" value="secA"/>
    <property type="match status" value="1"/>
</dbReference>
<dbReference type="PANTHER" id="PTHR30612:SF0">
    <property type="entry name" value="CHLOROPLAST PROTEIN-TRANSPORTING ATPASE"/>
    <property type="match status" value="1"/>
</dbReference>
<dbReference type="PANTHER" id="PTHR30612">
    <property type="entry name" value="SECA INNER MEMBRANE COMPONENT OF SEC PROTEIN SECRETION SYSTEM"/>
    <property type="match status" value="1"/>
</dbReference>
<dbReference type="Pfam" id="PF21090">
    <property type="entry name" value="P-loop_SecA"/>
    <property type="match status" value="2"/>
</dbReference>
<dbReference type="Pfam" id="PF07517">
    <property type="entry name" value="SecA_DEAD"/>
    <property type="match status" value="1"/>
</dbReference>
<dbReference type="Pfam" id="PF01043">
    <property type="entry name" value="SecA_PP_bind"/>
    <property type="match status" value="1"/>
</dbReference>
<dbReference type="Pfam" id="PF07516">
    <property type="entry name" value="SecA_SW"/>
    <property type="match status" value="1"/>
</dbReference>
<dbReference type="PRINTS" id="PR00906">
    <property type="entry name" value="SECA"/>
</dbReference>
<dbReference type="SMART" id="SM00957">
    <property type="entry name" value="SecA_DEAD"/>
    <property type="match status" value="1"/>
</dbReference>
<dbReference type="SMART" id="SM00958">
    <property type="entry name" value="SecA_PP_bind"/>
    <property type="match status" value="1"/>
</dbReference>
<dbReference type="SUPFAM" id="SSF81886">
    <property type="entry name" value="Helical scaffold and wing domains of SecA"/>
    <property type="match status" value="1"/>
</dbReference>
<dbReference type="SUPFAM" id="SSF52540">
    <property type="entry name" value="P-loop containing nucleoside triphosphate hydrolases"/>
    <property type="match status" value="2"/>
</dbReference>
<dbReference type="SUPFAM" id="SSF81767">
    <property type="entry name" value="Pre-protein crosslinking domain of SecA"/>
    <property type="match status" value="1"/>
</dbReference>
<dbReference type="PROSITE" id="PS01312">
    <property type="entry name" value="SECA"/>
    <property type="match status" value="1"/>
</dbReference>
<dbReference type="PROSITE" id="PS51196">
    <property type="entry name" value="SECA_MOTOR_DEAD"/>
    <property type="match status" value="1"/>
</dbReference>
<sequence>MVNPVRKLIENPKRQLHKYEHLADLTEAHADEMAALSDKQLQAKTDEFKSRYKNGETLDQLLPEAFAAVREADKRVLGLYPFRVQIIGGAVLHGGNIAEMKTGEGKTLTATMPVYLNALPGDGVHVVTVNEYLTQYQAEEMGQVYKFMGLSIGVNLNEMPNDEKRAAFACDITYTTNSAIGFDYLRDNMAQTMEERVVRSLNYVLIDEADSILIDSARTPLIIGGSSDNVNMFYQRADRFVKTLDEGEDKDYTVDEEQKTAMLTNQGIHKAEIFFNIDNLYDDQNVALAHFIETALRANYSFFRDKDYVVRDGEVKLIDQFTGRISEGTRMSDGLHQAFEAKEGVEIQGEGTTLASITLQNFFRMYKKISGMTGTAKTEEEELKEIYNMEVVQVPTNEPVRRVDEPDVLYFNLRGKFNAVVDEIDRLYKKGQPVLVGTVSVDTSELLSQMLDKKGIQHNVLNAKNNAKEAEIVAQAGQRGAVTIATNMAGRGTDIKLGPGVADLGGLAVIGTERHESRRIDNQLRGRSGRQGDPGFSRFYLSLEDDLMVRFGADRIKQMMQRMNLDNDDSVVKNRMISRSIESAQKRVEGNNYDTRKQVLQYDDVMRQQREIIYDERTQIMKSTESLKSIFLPMVYRTIDRVVNAHTTGQQKDWDLLSIVDFVDNALDNSGEITVADLNGKSLNDIKVLLYDLANREFFAKQDALSDKEQMVNFEKTIMLRSIDQHWMQHIDDMDRLRQSVMIRSYGQYNPLIEYQTAAFSTYNKMIDDIEYDTTRLFMKAQVRQNLH</sequence>
<reference key="1">
    <citation type="journal article" date="2006" name="Proc. Natl. Acad. Sci. U.S.A.">
        <title>Comparative genomics of the lactic acid bacteria.</title>
        <authorList>
            <person name="Makarova K.S."/>
            <person name="Slesarev A."/>
            <person name="Wolf Y.I."/>
            <person name="Sorokin A."/>
            <person name="Mirkin B."/>
            <person name="Koonin E.V."/>
            <person name="Pavlov A."/>
            <person name="Pavlova N."/>
            <person name="Karamychev V."/>
            <person name="Polouchine N."/>
            <person name="Shakhova V."/>
            <person name="Grigoriev I."/>
            <person name="Lou Y."/>
            <person name="Rohksar D."/>
            <person name="Lucas S."/>
            <person name="Huang K."/>
            <person name="Goodstein D.M."/>
            <person name="Hawkins T."/>
            <person name="Plengvidhya V."/>
            <person name="Welker D."/>
            <person name="Hughes J."/>
            <person name="Goh Y."/>
            <person name="Benson A."/>
            <person name="Baldwin K."/>
            <person name="Lee J.-H."/>
            <person name="Diaz-Muniz I."/>
            <person name="Dosti B."/>
            <person name="Smeianov V."/>
            <person name="Wechter W."/>
            <person name="Barabote R."/>
            <person name="Lorca G."/>
            <person name="Altermann E."/>
            <person name="Barrangou R."/>
            <person name="Ganesan B."/>
            <person name="Xie Y."/>
            <person name="Rawsthorne H."/>
            <person name="Tamir D."/>
            <person name="Parker C."/>
            <person name="Breidt F."/>
            <person name="Broadbent J.R."/>
            <person name="Hutkins R."/>
            <person name="O'Sullivan D."/>
            <person name="Steele J."/>
            <person name="Unlu G."/>
            <person name="Saier M.H. Jr."/>
            <person name="Klaenhammer T."/>
            <person name="Richardson P."/>
            <person name="Kozyavkin S."/>
            <person name="Weimer B.C."/>
            <person name="Mills D.A."/>
        </authorList>
    </citation>
    <scope>NUCLEOTIDE SEQUENCE [LARGE SCALE GENOMIC DNA]</scope>
    <source>
        <strain>ATCC BAA-331 / PSU-1</strain>
    </source>
</reference>
<feature type="chain" id="PRO_0000320877" description="Protein translocase subunit SecA">
    <location>
        <begin position="1"/>
        <end position="788"/>
    </location>
</feature>
<feature type="binding site" evidence="1">
    <location>
        <position position="85"/>
    </location>
    <ligand>
        <name>ATP</name>
        <dbReference type="ChEBI" id="CHEBI:30616"/>
    </ligand>
</feature>
<feature type="binding site" evidence="1">
    <location>
        <begin position="103"/>
        <end position="107"/>
    </location>
    <ligand>
        <name>ATP</name>
        <dbReference type="ChEBI" id="CHEBI:30616"/>
    </ligand>
</feature>
<feature type="binding site" evidence="1">
    <location>
        <position position="494"/>
    </location>
    <ligand>
        <name>ATP</name>
        <dbReference type="ChEBI" id="CHEBI:30616"/>
    </ligand>
</feature>
<gene>
    <name evidence="1" type="primary">secA</name>
    <name type="ordered locus">OEOE_1321</name>
</gene>
<protein>
    <recommendedName>
        <fullName evidence="1">Protein translocase subunit SecA</fullName>
        <ecNumber evidence="1">7.4.2.8</ecNumber>
    </recommendedName>
</protein>
<evidence type="ECO:0000255" key="1">
    <source>
        <dbReference type="HAMAP-Rule" id="MF_01382"/>
    </source>
</evidence>
<keyword id="KW-0067">ATP-binding</keyword>
<keyword id="KW-1003">Cell membrane</keyword>
<keyword id="KW-0963">Cytoplasm</keyword>
<keyword id="KW-0472">Membrane</keyword>
<keyword id="KW-0547">Nucleotide-binding</keyword>
<keyword id="KW-0653">Protein transport</keyword>
<keyword id="KW-1185">Reference proteome</keyword>
<keyword id="KW-1278">Translocase</keyword>
<keyword id="KW-0811">Translocation</keyword>
<keyword id="KW-0813">Transport</keyword>
<proteinExistence type="inferred from homology"/>
<name>SECA_OENOB</name>
<organism>
    <name type="scientific">Oenococcus oeni (strain ATCC BAA-331 / PSU-1)</name>
    <dbReference type="NCBI Taxonomy" id="203123"/>
    <lineage>
        <taxon>Bacteria</taxon>
        <taxon>Bacillati</taxon>
        <taxon>Bacillota</taxon>
        <taxon>Bacilli</taxon>
        <taxon>Lactobacillales</taxon>
        <taxon>Lactobacillaceae</taxon>
        <taxon>Oenococcus</taxon>
    </lineage>
</organism>
<accession>Q04ED0</accession>
<comment type="function">
    <text evidence="1">Part of the Sec protein translocase complex. Interacts with the SecYEG preprotein conducting channel. Has a central role in coupling the hydrolysis of ATP to the transfer of proteins into and across the cell membrane, serving as an ATP-driven molecular motor driving the stepwise translocation of polypeptide chains across the membrane.</text>
</comment>
<comment type="catalytic activity">
    <reaction evidence="1">
        <text>ATP + H2O + cellular proteinSide 1 = ADP + phosphate + cellular proteinSide 2.</text>
        <dbReference type="EC" id="7.4.2.8"/>
    </reaction>
</comment>
<comment type="subunit">
    <text evidence="1">Monomer and homodimer. Part of the essential Sec protein translocation apparatus which comprises SecA, SecYEG and auxiliary proteins SecDF. Other proteins may also be involved.</text>
</comment>
<comment type="subcellular location">
    <subcellularLocation>
        <location evidence="1">Cell membrane</location>
        <topology evidence="1">Peripheral membrane protein</topology>
        <orientation evidence="1">Cytoplasmic side</orientation>
    </subcellularLocation>
    <subcellularLocation>
        <location evidence="1">Cytoplasm</location>
    </subcellularLocation>
    <text evidence="1">Distribution is 50-50.</text>
</comment>
<comment type="similarity">
    <text evidence="1">Belongs to the SecA family.</text>
</comment>